<organism>
    <name type="scientific">Rattus norvegicus</name>
    <name type="common">Rat</name>
    <dbReference type="NCBI Taxonomy" id="10116"/>
    <lineage>
        <taxon>Eukaryota</taxon>
        <taxon>Metazoa</taxon>
        <taxon>Chordata</taxon>
        <taxon>Craniata</taxon>
        <taxon>Vertebrata</taxon>
        <taxon>Euteleostomi</taxon>
        <taxon>Mammalia</taxon>
        <taxon>Eutheria</taxon>
        <taxon>Euarchontoglires</taxon>
        <taxon>Glires</taxon>
        <taxon>Rodentia</taxon>
        <taxon>Myomorpha</taxon>
        <taxon>Muroidea</taxon>
        <taxon>Muridae</taxon>
        <taxon>Murinae</taxon>
        <taxon>Rattus</taxon>
    </lineage>
</organism>
<keyword id="KW-0025">Alternative splicing</keyword>
<keyword id="KW-0037">Angiogenesis</keyword>
<keyword id="KW-0217">Developmental protein</keyword>
<keyword id="KW-0221">Differentiation</keyword>
<keyword id="KW-0903">Direct protein sequencing</keyword>
<keyword id="KW-1015">Disulfide bond</keyword>
<keyword id="KW-0325">Glycoprotein</keyword>
<keyword id="KW-0339">Growth factor</keyword>
<keyword id="KW-0358">Heparin-binding</keyword>
<keyword id="KW-0497">Mitogen</keyword>
<keyword id="KW-1185">Reference proteome</keyword>
<keyword id="KW-0964">Secreted</keyword>
<keyword id="KW-0732">Signal</keyword>
<accession>P16612</accession>
<accession>Q541S6</accession>
<accession>Q91ZE1</accession>
<accession>Q9JKX7</accession>
<accession>Q9QXG6</accession>
<accession>Q9QXG7</accession>
<evidence type="ECO:0000250" key="1"/>
<evidence type="ECO:0000250" key="2">
    <source>
        <dbReference type="UniProtKB" id="P15692"/>
    </source>
</evidence>
<evidence type="ECO:0000250" key="3">
    <source>
        <dbReference type="UniProtKB" id="Q00731"/>
    </source>
</evidence>
<evidence type="ECO:0000256" key="4">
    <source>
        <dbReference type="SAM" id="MobiDB-lite"/>
    </source>
</evidence>
<evidence type="ECO:0000269" key="5">
    <source>
    </source>
</evidence>
<evidence type="ECO:0000269" key="6">
    <source>
    </source>
</evidence>
<evidence type="ECO:0000269" key="7">
    <source>
    </source>
</evidence>
<evidence type="ECO:0000303" key="8">
    <source>
    </source>
</evidence>
<evidence type="ECO:0000303" key="9">
    <source>
    </source>
</evidence>
<evidence type="ECO:0000303" key="10">
    <source ref="3"/>
</evidence>
<evidence type="ECO:0000305" key="11"/>
<feature type="signal peptide" evidence="6 7">
    <location>
        <begin position="1"/>
        <end position="26"/>
    </location>
</feature>
<feature type="chain" id="PRO_0000023390" description="Vascular endothelial growth factor A">
    <location>
        <begin position="27"/>
        <end position="214"/>
    </location>
</feature>
<feature type="region of interest" description="Disordered" evidence="4">
    <location>
        <begin position="131"/>
        <end position="159"/>
    </location>
</feature>
<feature type="compositionally biased region" description="Basic and acidic residues" evidence="4">
    <location>
        <begin position="131"/>
        <end position="142"/>
    </location>
</feature>
<feature type="compositionally biased region" description="Basic residues" evidence="4">
    <location>
        <begin position="143"/>
        <end position="159"/>
    </location>
</feature>
<feature type="glycosylation site" description="N-linked (GlcNAc...) asparagine">
    <location>
        <position position="100"/>
    </location>
</feature>
<feature type="disulfide bond" evidence="1">
    <location>
        <begin position="51"/>
        <end position="93"/>
    </location>
</feature>
<feature type="disulfide bond" description="Interchain" evidence="1">
    <location>
        <position position="76"/>
    </location>
</feature>
<feature type="disulfide bond" evidence="1">
    <location>
        <begin position="82"/>
        <end position="127"/>
    </location>
</feature>
<feature type="disulfide bond" description="Interchain" evidence="1">
    <location>
        <position position="85"/>
    </location>
</feature>
<feature type="disulfide bond" evidence="1">
    <location>
        <begin position="86"/>
        <end position="129"/>
    </location>
</feature>
<feature type="splice variant" id="VSP_004629" description="In isoform VEGF-A164." evidence="8 9 10">
    <original>K</original>
    <variation>N</variation>
    <location>
        <position position="140"/>
    </location>
</feature>
<feature type="splice variant" id="VSP_004631" description="In isoform VEGF-A120." evidence="8">
    <location>
        <begin position="141"/>
        <end position="208"/>
    </location>
</feature>
<feature type="splice variant" id="VSP_004630" description="In isoform VEGF-A164." evidence="8 9 10">
    <location>
        <begin position="141"/>
        <end position="164"/>
    </location>
</feature>
<feature type="splice variant" id="VSP_004632" description="In isoform VEGF-A144." evidence="8">
    <location>
        <begin position="165"/>
        <end position="208"/>
    </location>
</feature>
<feature type="sequence conflict" description="In Ref. 2; AAF19212." evidence="11" ref="2">
    <original>V</original>
    <variation>A</variation>
    <location>
        <position position="101"/>
    </location>
</feature>
<protein>
    <recommendedName>
        <fullName>Vascular endothelial growth factor A</fullName>
        <shortName>VEGF-A</shortName>
    </recommendedName>
    <alternativeName>
        <fullName>Vascular permeability factor</fullName>
        <shortName>VPF</shortName>
    </alternativeName>
</protein>
<comment type="function">
    <text evidence="2 3 5">Growth factor active in angiogenesis, vasculogenesis and endothelial cell growth. Induces endothelial cell proliferation, promotes cell migration, inhibits apoptosis and induces permeabilization of blood vessels. Binds to the FLT1/VEGFR1 and KDR/VEGFR2 receptors, heparan sulfate and heparin. May play a role in increasing vascular permeability during lactation, when increased transport of molecules from the blood is required for efficient milk protein synthesis. Binding to NRP1 receptor initiates a signaling pathway needed for motor neuron axon guidance and cell body migration, including for the caudal migration of facial motor neurons from rhombomere 4 to rhombomere 6 during embryonic development (By similarity). Also binds the DEAR/FBXW7-AS1 receptor (By similarity).</text>
</comment>
<comment type="subunit">
    <text evidence="2 7">Homodimer; disulfide-linked (PubMed:7706320). Also found as heterodimer with PGF (PubMed:7706320). Interacts with NRP1 (By similarity). Interacts with isoform 2 of BSG (By similarity). Interacts with CD82; this interaction inhibits VEGFA-mediated signaling pathway (By similarity).</text>
</comment>
<comment type="subcellular location">
    <subcellularLocation>
        <location evidence="1">Secreted</location>
    </subcellularLocation>
    <text evidence="1">VEGF-A120 is acidic and freely secreted. VEGF-A164 is more basic, has heparin-binding properties and, although a significant proportion remains cell-associated, most is freely secreted. VEGF-A188 is very basic, it is cell-associated after secretion and is bound avidly by heparin and the extracellular matrix, although it may be released as a soluble form by heparin, heparinase or plasmin (By similarity).</text>
</comment>
<comment type="alternative products">
    <event type="alternative splicing"/>
    <isoform>
        <id>P16612-1</id>
        <name>VEGF-A188</name>
        <sequence type="displayed"/>
    </isoform>
    <isoform>
        <id>P16612-2</id>
        <name>VEGF-A164</name>
        <sequence type="described" ref="VSP_004629 VSP_004630"/>
    </isoform>
    <isoform>
        <id>P16612-3</id>
        <name>VEGF-A144</name>
        <sequence type="described" ref="VSP_004632"/>
    </isoform>
    <isoform>
        <id>P16612-4</id>
        <name>VEGF-A120</name>
        <sequence type="described" ref="VSP_004631"/>
    </isoform>
    <text>Additional isoforms seem to exist.</text>
</comment>
<comment type="tissue specificity">
    <text evidence="5">Expressed in the pituitary, in brain, in particularly in supraoptic and paraventricular nuclei and the choroid plexus. Also found abundantly in the corpus luteum of the ovary and in kidney glomeruli. Expressed in the ductal epithelial cells of post-pubertal mammary glands. Expressed in the ductal and alveolar epithelial cells throughout the whole period of gestational evolution, lactation and involution.</text>
</comment>
<comment type="developmental stage">
    <text evidence="5">Increases during pregnancy (5.0-fold increase on day 12 with a subsequent decrease on day 18) and during lactation (18.5-fold increase on day 7). Levels appear to be minimally altered during involution.</text>
</comment>
<comment type="similarity">
    <text evidence="11">Belongs to the PDGF/VEGF growth factor family.</text>
</comment>
<dbReference type="EMBL" id="M32167">
    <property type="protein sequence ID" value="AAA41211.1"/>
    <property type="molecule type" value="mRNA"/>
</dbReference>
<dbReference type="EMBL" id="AF215725">
    <property type="protein sequence ID" value="AAF19211.1"/>
    <property type="molecule type" value="mRNA"/>
</dbReference>
<dbReference type="EMBL" id="AF215726">
    <property type="protein sequence ID" value="AAF19212.1"/>
    <property type="molecule type" value="mRNA"/>
</dbReference>
<dbReference type="EMBL" id="AF222779">
    <property type="protein sequence ID" value="AAF25958.1"/>
    <property type="molecule type" value="mRNA"/>
</dbReference>
<dbReference type="EMBL" id="AY033506">
    <property type="protein sequence ID" value="AAL07526.1"/>
    <property type="molecule type" value="mRNA"/>
</dbReference>
<dbReference type="EMBL" id="AY033508">
    <property type="protein sequence ID" value="AAL07528.1"/>
    <property type="molecule type" value="mRNA"/>
</dbReference>
<dbReference type="PIR" id="A35987">
    <property type="entry name" value="A35987"/>
</dbReference>
<dbReference type="RefSeq" id="NP_001103804.1">
    <property type="nucleotide sequence ID" value="NM_001110334.2"/>
</dbReference>
<dbReference type="RefSeq" id="NP_001274036.1">
    <molecule id="P16612-1"/>
    <property type="nucleotide sequence ID" value="NM_001287107.1"/>
</dbReference>
<dbReference type="RefSeq" id="NP_001274037.1">
    <molecule id="P16612-2"/>
    <property type="nucleotide sequence ID" value="NM_001287108.1"/>
</dbReference>
<dbReference type="RefSeq" id="NP_001274039.1">
    <molecule id="P16612-4"/>
    <property type="nucleotide sequence ID" value="NM_001287110.1"/>
</dbReference>
<dbReference type="RefSeq" id="NP_001274040.1">
    <property type="nucleotide sequence ID" value="NM_001287111.1"/>
</dbReference>
<dbReference type="RefSeq" id="NP_001274041.1">
    <molecule id="P16612-3"/>
    <property type="nucleotide sequence ID" value="NM_001287112.1"/>
</dbReference>
<dbReference type="RefSeq" id="NP_001274043.1">
    <property type="nucleotide sequence ID" value="NM_001287114.1"/>
</dbReference>
<dbReference type="RefSeq" id="NP_114024.2">
    <property type="nucleotide sequence ID" value="NM_031836.3"/>
</dbReference>
<dbReference type="SMR" id="P16612"/>
<dbReference type="BioGRID" id="249830">
    <property type="interactions" value="2"/>
</dbReference>
<dbReference type="CORUM" id="P16612"/>
<dbReference type="FunCoup" id="P16612">
    <property type="interactions" value="822"/>
</dbReference>
<dbReference type="STRING" id="10116.ENSRNOP00000026637"/>
<dbReference type="GlyCosmos" id="P16612">
    <property type="glycosylation" value="1 site, No reported glycans"/>
</dbReference>
<dbReference type="GlyGen" id="P16612">
    <property type="glycosylation" value="1 site"/>
</dbReference>
<dbReference type="PhosphoSitePlus" id="P16612"/>
<dbReference type="PaxDb" id="10116-ENSRNOP00000026637"/>
<dbReference type="ABCD" id="P16612">
    <property type="antibodies" value="1 sequenced antibody"/>
</dbReference>
<dbReference type="Ensembl" id="ENSRNOT00000044163.5">
    <molecule id="P16612-4"/>
    <property type="protein sequence ID" value="ENSRNOP00000050127.3"/>
    <property type="gene ID" value="ENSRNOG00000019598.9"/>
</dbReference>
<dbReference type="GeneID" id="83785"/>
<dbReference type="KEGG" id="rno:83785"/>
<dbReference type="UCSC" id="RGD:619991">
    <molecule id="P16612-1"/>
    <property type="organism name" value="rat"/>
</dbReference>
<dbReference type="AGR" id="RGD:619991"/>
<dbReference type="CTD" id="7422"/>
<dbReference type="RGD" id="619991">
    <property type="gene designation" value="Vegfa"/>
</dbReference>
<dbReference type="eggNOG" id="ENOG502QVI8">
    <property type="taxonomic scope" value="Eukaryota"/>
</dbReference>
<dbReference type="GeneTree" id="ENSGT00940000157284"/>
<dbReference type="InParanoid" id="P16612"/>
<dbReference type="OrthoDB" id="48064at9989"/>
<dbReference type="PhylomeDB" id="P16612"/>
<dbReference type="Reactome" id="R-RNO-114608">
    <property type="pathway name" value="Platelet degranulation"/>
</dbReference>
<dbReference type="Reactome" id="R-RNO-194313">
    <property type="pathway name" value="VEGF ligand-receptor interactions"/>
</dbReference>
<dbReference type="Reactome" id="R-RNO-195399">
    <property type="pathway name" value="VEGF binds to VEGFR leading to receptor dimerization"/>
</dbReference>
<dbReference type="Reactome" id="R-RNO-4420097">
    <property type="pathway name" value="VEGFA-VEGFR2 Pathway"/>
</dbReference>
<dbReference type="Reactome" id="R-RNO-5218921">
    <property type="pathway name" value="VEGFR2 mediated cell proliferation"/>
</dbReference>
<dbReference type="PRO" id="PR:P16612"/>
<dbReference type="Proteomes" id="UP000002494">
    <property type="component" value="Chromosome 9"/>
</dbReference>
<dbReference type="GO" id="GO:0005912">
    <property type="term" value="C:adherens junction"/>
    <property type="evidence" value="ECO:0000266"/>
    <property type="project" value="RGD"/>
</dbReference>
<dbReference type="GO" id="GO:0005604">
    <property type="term" value="C:basement membrane"/>
    <property type="evidence" value="ECO:0000314"/>
    <property type="project" value="RGD"/>
</dbReference>
<dbReference type="GO" id="GO:0009986">
    <property type="term" value="C:cell surface"/>
    <property type="evidence" value="ECO:0000266"/>
    <property type="project" value="RGD"/>
</dbReference>
<dbReference type="GO" id="GO:0005737">
    <property type="term" value="C:cytoplasm"/>
    <property type="evidence" value="ECO:0000266"/>
    <property type="project" value="RGD"/>
</dbReference>
<dbReference type="GO" id="GO:0005615">
    <property type="term" value="C:extracellular space"/>
    <property type="evidence" value="ECO:0000314"/>
    <property type="project" value="RGD"/>
</dbReference>
<dbReference type="GO" id="GO:0016020">
    <property type="term" value="C:membrane"/>
    <property type="evidence" value="ECO:0007669"/>
    <property type="project" value="InterPro"/>
</dbReference>
<dbReference type="GO" id="GO:0005634">
    <property type="term" value="C:nucleus"/>
    <property type="evidence" value="ECO:0000266"/>
    <property type="project" value="RGD"/>
</dbReference>
<dbReference type="GO" id="GO:0030141">
    <property type="term" value="C:secretory granule"/>
    <property type="evidence" value="ECO:0000266"/>
    <property type="project" value="RGD"/>
</dbReference>
<dbReference type="GO" id="GO:1990150">
    <property type="term" value="C:VEGF-A complex"/>
    <property type="evidence" value="ECO:0000266"/>
    <property type="project" value="RGD"/>
</dbReference>
<dbReference type="GO" id="GO:0031982">
    <property type="term" value="C:vesicle"/>
    <property type="evidence" value="ECO:0000314"/>
    <property type="project" value="RGD"/>
</dbReference>
<dbReference type="GO" id="GO:0042056">
    <property type="term" value="F:chemoattractant activity"/>
    <property type="evidence" value="ECO:0000315"/>
    <property type="project" value="RGD"/>
</dbReference>
<dbReference type="GO" id="GO:0005125">
    <property type="term" value="F:cytokine activity"/>
    <property type="evidence" value="ECO:0000266"/>
    <property type="project" value="RGD"/>
</dbReference>
<dbReference type="GO" id="GO:0001968">
    <property type="term" value="F:fibronectin binding"/>
    <property type="evidence" value="ECO:0000266"/>
    <property type="project" value="RGD"/>
</dbReference>
<dbReference type="GO" id="GO:0008083">
    <property type="term" value="F:growth factor activity"/>
    <property type="evidence" value="ECO:0000314"/>
    <property type="project" value="RGD"/>
</dbReference>
<dbReference type="GO" id="GO:0019838">
    <property type="term" value="F:growth factor binding"/>
    <property type="evidence" value="ECO:0000353"/>
    <property type="project" value="RGD"/>
</dbReference>
<dbReference type="GO" id="GO:0008201">
    <property type="term" value="F:heparin binding"/>
    <property type="evidence" value="ECO:0000266"/>
    <property type="project" value="RGD"/>
</dbReference>
<dbReference type="GO" id="GO:0042802">
    <property type="term" value="F:identical protein binding"/>
    <property type="evidence" value="ECO:0000353"/>
    <property type="project" value="RGD"/>
</dbReference>
<dbReference type="GO" id="GO:0005161">
    <property type="term" value="F:platelet-derived growth factor receptor binding"/>
    <property type="evidence" value="ECO:0000266"/>
    <property type="project" value="RGD"/>
</dbReference>
<dbReference type="GO" id="GO:0048018">
    <property type="term" value="F:receptor ligand activity"/>
    <property type="evidence" value="ECO:0000266"/>
    <property type="project" value="RGD"/>
</dbReference>
<dbReference type="GO" id="GO:0030297">
    <property type="term" value="F:transmembrane receptor protein tyrosine kinase activator activity"/>
    <property type="evidence" value="ECO:0000266"/>
    <property type="project" value="RGD"/>
</dbReference>
<dbReference type="GO" id="GO:0043183">
    <property type="term" value="F:vascular endothelial growth factor receptor 1 binding"/>
    <property type="evidence" value="ECO:0000266"/>
    <property type="project" value="RGD"/>
</dbReference>
<dbReference type="GO" id="GO:0043184">
    <property type="term" value="F:vascular endothelial growth factor receptor 2 binding"/>
    <property type="evidence" value="ECO:0000315"/>
    <property type="project" value="RGD"/>
</dbReference>
<dbReference type="GO" id="GO:0005172">
    <property type="term" value="F:vascular endothelial growth factor receptor binding"/>
    <property type="evidence" value="ECO:0000266"/>
    <property type="project" value="RGD"/>
</dbReference>
<dbReference type="GO" id="GO:0001525">
    <property type="term" value="P:angiogenesis"/>
    <property type="evidence" value="ECO:0000315"/>
    <property type="project" value="RGD"/>
</dbReference>
<dbReference type="GO" id="GO:0060978">
    <property type="term" value="P:angiogenesis involved in coronary vascular morphogenesis"/>
    <property type="evidence" value="ECO:0000315"/>
    <property type="project" value="RGD"/>
</dbReference>
<dbReference type="GO" id="GO:0006915">
    <property type="term" value="P:apoptotic process"/>
    <property type="evidence" value="ECO:0000266"/>
    <property type="project" value="RGD"/>
</dbReference>
<dbReference type="GO" id="GO:0048844">
    <property type="term" value="P:artery morphogenesis"/>
    <property type="evidence" value="ECO:0000266"/>
    <property type="project" value="RGD"/>
</dbReference>
<dbReference type="GO" id="GO:0001568">
    <property type="term" value="P:blood vessel development"/>
    <property type="evidence" value="ECO:0000266"/>
    <property type="project" value="RGD"/>
</dbReference>
<dbReference type="GO" id="GO:0048514">
    <property type="term" value="P:blood vessel morphogenesis"/>
    <property type="evidence" value="ECO:0000266"/>
    <property type="project" value="RGD"/>
</dbReference>
<dbReference type="GO" id="GO:0001974">
    <property type="term" value="P:blood vessel remodeling"/>
    <property type="evidence" value="ECO:0000315"/>
    <property type="project" value="RGD"/>
</dbReference>
<dbReference type="GO" id="GO:0060346">
    <property type="term" value="P:bone trabecula formation"/>
    <property type="evidence" value="ECO:0000266"/>
    <property type="project" value="RGD"/>
</dbReference>
<dbReference type="GO" id="GO:0061430">
    <property type="term" value="P:bone trabecula morphogenesis"/>
    <property type="evidence" value="ECO:0000266"/>
    <property type="project" value="RGD"/>
</dbReference>
<dbReference type="GO" id="GO:0001569">
    <property type="term" value="P:branching involved in blood vessel morphogenesis"/>
    <property type="evidence" value="ECO:0000266"/>
    <property type="project" value="RGD"/>
</dbReference>
<dbReference type="GO" id="GO:0048593">
    <property type="term" value="P:camera-type eye morphogenesis"/>
    <property type="evidence" value="ECO:0000266"/>
    <property type="project" value="RGD"/>
</dbReference>
<dbReference type="GO" id="GO:0055013">
    <property type="term" value="P:cardiac muscle cell development"/>
    <property type="evidence" value="ECO:0000266"/>
    <property type="project" value="RGD"/>
</dbReference>
<dbReference type="GO" id="GO:0060326">
    <property type="term" value="P:cell chemotaxis"/>
    <property type="evidence" value="ECO:0000315"/>
    <property type="project" value="RGD"/>
</dbReference>
<dbReference type="GO" id="GO:0016477">
    <property type="term" value="P:cell migration"/>
    <property type="evidence" value="ECO:0000266"/>
    <property type="project" value="RGD"/>
</dbReference>
<dbReference type="GO" id="GO:0002042">
    <property type="term" value="P:cell migration involved in sprouting angiogenesis"/>
    <property type="evidence" value="ECO:0000266"/>
    <property type="project" value="RGD"/>
</dbReference>
<dbReference type="GO" id="GO:0008283">
    <property type="term" value="P:cell population proliferation"/>
    <property type="evidence" value="ECO:0000266"/>
    <property type="project" value="RGD"/>
</dbReference>
<dbReference type="GO" id="GO:0098609">
    <property type="term" value="P:cell-cell adhesion"/>
    <property type="evidence" value="ECO:0000266"/>
    <property type="project" value="RGD"/>
</dbReference>
<dbReference type="GO" id="GO:0071549">
    <property type="term" value="P:cellular response to dexamethasone stimulus"/>
    <property type="evidence" value="ECO:0000270"/>
    <property type="project" value="RGD"/>
</dbReference>
<dbReference type="GO" id="GO:0071391">
    <property type="term" value="P:cellular response to estrogen stimulus"/>
    <property type="evidence" value="ECO:0000270"/>
    <property type="project" value="RGD"/>
</dbReference>
<dbReference type="GO" id="GO:0044344">
    <property type="term" value="P:cellular response to fibroblast growth factor stimulus"/>
    <property type="evidence" value="ECO:0000270"/>
    <property type="project" value="RGD"/>
</dbReference>
<dbReference type="GO" id="GO:0071456">
    <property type="term" value="P:cellular response to hypoxia"/>
    <property type="evidence" value="ECO:0000266"/>
    <property type="project" value="RGD"/>
</dbReference>
<dbReference type="GO" id="GO:0071260">
    <property type="term" value="P:cellular response to mechanical stimulus"/>
    <property type="evidence" value="ECO:0000270"/>
    <property type="project" value="RGD"/>
</dbReference>
<dbReference type="GO" id="GO:0035924">
    <property type="term" value="P:cellular response to vascular endothelial growth factor stimulus"/>
    <property type="evidence" value="ECO:0000266"/>
    <property type="project" value="RGD"/>
</dbReference>
<dbReference type="GO" id="GO:1904568">
    <property type="term" value="P:cellular response to wortmannin"/>
    <property type="evidence" value="ECO:0000270"/>
    <property type="project" value="RGD"/>
</dbReference>
<dbReference type="GO" id="GO:0071466">
    <property type="term" value="P:cellular response to xenobiotic stimulus"/>
    <property type="evidence" value="ECO:0000270"/>
    <property type="project" value="RGD"/>
</dbReference>
<dbReference type="GO" id="GO:0097533">
    <property type="term" value="P:cellular stress response to acid chemical"/>
    <property type="evidence" value="ECO:0000266"/>
    <property type="project" value="RGD"/>
</dbReference>
<dbReference type="GO" id="GO:0071679">
    <property type="term" value="P:commissural neuron axon guidance"/>
    <property type="evidence" value="ECO:0000266"/>
    <property type="project" value="RGD"/>
</dbReference>
<dbReference type="GO" id="GO:0071542">
    <property type="term" value="P:dopaminergic neuron differentiation"/>
    <property type="evidence" value="ECO:0000266"/>
    <property type="project" value="RGD"/>
</dbReference>
<dbReference type="GO" id="GO:0035767">
    <property type="term" value="P:endothelial cell chemotaxis"/>
    <property type="evidence" value="ECO:0000266"/>
    <property type="project" value="RGD"/>
</dbReference>
<dbReference type="GO" id="GO:0043542">
    <property type="term" value="P:endothelial cell migration"/>
    <property type="evidence" value="ECO:0000266"/>
    <property type="project" value="RGD"/>
</dbReference>
<dbReference type="GO" id="GO:0001935">
    <property type="term" value="P:endothelial cell proliferation"/>
    <property type="evidence" value="ECO:0000266"/>
    <property type="project" value="RGD"/>
</dbReference>
<dbReference type="GO" id="GO:0030855">
    <property type="term" value="P:epithelial cell differentiation"/>
    <property type="evidence" value="ECO:0000266"/>
    <property type="project" value="RGD"/>
</dbReference>
<dbReference type="GO" id="GO:0002070">
    <property type="term" value="P:epithelial cell maturation"/>
    <property type="evidence" value="ECO:0000266"/>
    <property type="project" value="RGD"/>
</dbReference>
<dbReference type="GO" id="GO:0050673">
    <property type="term" value="P:epithelial cell proliferation"/>
    <property type="evidence" value="ECO:0000266"/>
    <property type="project" value="RGD"/>
</dbReference>
<dbReference type="GO" id="GO:0042462">
    <property type="term" value="P:eye photoreceptor cell development"/>
    <property type="evidence" value="ECO:0000266"/>
    <property type="project" value="RGD"/>
</dbReference>
<dbReference type="GO" id="GO:0007565">
    <property type="term" value="P:female pregnancy"/>
    <property type="evidence" value="ECO:0000270"/>
    <property type="project" value="RGD"/>
</dbReference>
<dbReference type="GO" id="GO:0003007">
    <property type="term" value="P:heart morphogenesis"/>
    <property type="evidence" value="ECO:0000266"/>
    <property type="project" value="RGD"/>
</dbReference>
<dbReference type="GO" id="GO:0048873">
    <property type="term" value="P:homeostasis of number of cells within a tissue"/>
    <property type="evidence" value="ECO:0000266"/>
    <property type="project" value="RGD"/>
</dbReference>
<dbReference type="GO" id="GO:0001701">
    <property type="term" value="P:in utero embryonic development"/>
    <property type="evidence" value="ECO:0000266"/>
    <property type="project" value="RGD"/>
</dbReference>
<dbReference type="GO" id="GO:0050930">
    <property type="term" value="P:induction of positive chemotaxis"/>
    <property type="evidence" value="ECO:0000318"/>
    <property type="project" value="GO_Central"/>
</dbReference>
<dbReference type="GO" id="GO:0001822">
    <property type="term" value="P:kidney development"/>
    <property type="evidence" value="ECO:0000266"/>
    <property type="project" value="RGD"/>
</dbReference>
<dbReference type="GO" id="GO:0007595">
    <property type="term" value="P:lactation"/>
    <property type="evidence" value="ECO:0000266"/>
    <property type="project" value="RGD"/>
</dbReference>
<dbReference type="GO" id="GO:0048286">
    <property type="term" value="P:lung alveolus development"/>
    <property type="evidence" value="ECO:0000315"/>
    <property type="project" value="RGD"/>
</dbReference>
<dbReference type="GO" id="GO:0030324">
    <property type="term" value="P:lung development"/>
    <property type="evidence" value="ECO:0000266"/>
    <property type="project" value="RGD"/>
</dbReference>
<dbReference type="GO" id="GO:0060426">
    <property type="term" value="P:lung vasculature development"/>
    <property type="evidence" value="ECO:0000266"/>
    <property type="project" value="RGD"/>
</dbReference>
<dbReference type="GO" id="GO:0001946">
    <property type="term" value="P:lymphangiogenesis"/>
    <property type="evidence" value="ECO:0000266"/>
    <property type="project" value="RGD"/>
</dbReference>
<dbReference type="GO" id="GO:0030225">
    <property type="term" value="P:macrophage differentiation"/>
    <property type="evidence" value="ECO:0000266"/>
    <property type="project" value="RGD"/>
</dbReference>
<dbReference type="GO" id="GO:0060749">
    <property type="term" value="P:mammary gland alveolus development"/>
    <property type="evidence" value="ECO:0000266"/>
    <property type="project" value="RGD"/>
</dbReference>
<dbReference type="GO" id="GO:0007498">
    <property type="term" value="P:mesoderm development"/>
    <property type="evidence" value="ECO:0000266"/>
    <property type="project" value="RGD"/>
</dbReference>
<dbReference type="GO" id="GO:0030224">
    <property type="term" value="P:monocyte differentiation"/>
    <property type="evidence" value="ECO:0000266"/>
    <property type="project" value="RGD"/>
</dbReference>
<dbReference type="GO" id="GO:0097475">
    <property type="term" value="P:motor neuron migration"/>
    <property type="evidence" value="ECO:0000250"/>
    <property type="project" value="UniProtKB"/>
</dbReference>
<dbReference type="GO" id="GO:0048255">
    <property type="term" value="P:mRNA stabilization"/>
    <property type="evidence" value="ECO:0000314"/>
    <property type="project" value="RGD"/>
</dbReference>
<dbReference type="GO" id="GO:1903392">
    <property type="term" value="P:negative regulation of adherens junction organization"/>
    <property type="evidence" value="ECO:0000266"/>
    <property type="project" value="RGD"/>
</dbReference>
<dbReference type="GO" id="GO:0043066">
    <property type="term" value="P:negative regulation of apoptotic process"/>
    <property type="evidence" value="ECO:0000266"/>
    <property type="project" value="RGD"/>
</dbReference>
<dbReference type="GO" id="GO:1905604">
    <property type="term" value="P:negative regulation of blood-brain barrier permeability"/>
    <property type="evidence" value="ECO:0000266"/>
    <property type="project" value="RGD"/>
</dbReference>
<dbReference type="GO" id="GO:0045779">
    <property type="term" value="P:negative regulation of bone resorption"/>
    <property type="evidence" value="ECO:0000315"/>
    <property type="project" value="RGD"/>
</dbReference>
<dbReference type="GO" id="GO:0022408">
    <property type="term" value="P:negative regulation of cell-cell adhesion"/>
    <property type="evidence" value="ECO:0000266"/>
    <property type="project" value="RGD"/>
</dbReference>
<dbReference type="GO" id="GO:2000048">
    <property type="term" value="P:negative regulation of cell-cell adhesion mediated by cadherin"/>
    <property type="evidence" value="ECO:0000266"/>
    <property type="project" value="RGD"/>
</dbReference>
<dbReference type="GO" id="GO:0010719">
    <property type="term" value="P:negative regulation of epithelial to mesenchymal transition"/>
    <property type="evidence" value="ECO:0000266"/>
    <property type="project" value="RGD"/>
</dbReference>
<dbReference type="GO" id="GO:1903141">
    <property type="term" value="P:negative regulation of establishment of endothelial barrier"/>
    <property type="evidence" value="ECO:0000266"/>
    <property type="project" value="RGD"/>
</dbReference>
<dbReference type="GO" id="GO:0045599">
    <property type="term" value="P:negative regulation of fat cell differentiation"/>
    <property type="evidence" value="ECO:0000266"/>
    <property type="project" value="RGD"/>
</dbReference>
<dbReference type="GO" id="GO:0010629">
    <property type="term" value="P:negative regulation of gene expression"/>
    <property type="evidence" value="ECO:0000266"/>
    <property type="project" value="RGD"/>
</dbReference>
<dbReference type="GO" id="GO:0043069">
    <property type="term" value="P:negative regulation of programmed cell death"/>
    <property type="evidence" value="ECO:0000315"/>
    <property type="project" value="RGD"/>
</dbReference>
<dbReference type="GO" id="GO:0000122">
    <property type="term" value="P:negative regulation of transcription by RNA polymerase II"/>
    <property type="evidence" value="ECO:0000266"/>
    <property type="project" value="RGD"/>
</dbReference>
<dbReference type="GO" id="GO:0007399">
    <property type="term" value="P:nervous system development"/>
    <property type="evidence" value="ECO:0000314"/>
    <property type="project" value="RGD"/>
</dbReference>
<dbReference type="GO" id="GO:0007405">
    <property type="term" value="P:neuroblast proliferation"/>
    <property type="evidence" value="ECO:0000266"/>
    <property type="project" value="RGD"/>
</dbReference>
<dbReference type="GO" id="GO:0051402">
    <property type="term" value="P:neuron apoptotic process"/>
    <property type="evidence" value="ECO:0000315"/>
    <property type="project" value="RGD"/>
</dbReference>
<dbReference type="GO" id="GO:0001541">
    <property type="term" value="P:ovarian follicle development"/>
    <property type="evidence" value="ECO:0000266"/>
    <property type="project" value="RGD"/>
</dbReference>
<dbReference type="GO" id="GO:0007200">
    <property type="term" value="P:phospholipase C-activating G protein-coupled receptor signaling pathway"/>
    <property type="evidence" value="ECO:0000266"/>
    <property type="project" value="RGD"/>
</dbReference>
<dbReference type="GO" id="GO:0050918">
    <property type="term" value="P:positive chemotaxis"/>
    <property type="evidence" value="ECO:0000266"/>
    <property type="project" value="RGD"/>
</dbReference>
<dbReference type="GO" id="GO:0045766">
    <property type="term" value="P:positive regulation of angiogenesis"/>
    <property type="evidence" value="ECO:0000314"/>
    <property type="project" value="RGD"/>
</dbReference>
<dbReference type="GO" id="GO:0048842">
    <property type="term" value="P:positive regulation of axon extension involved in axon guidance"/>
    <property type="evidence" value="ECO:0000266"/>
    <property type="project" value="RGD"/>
</dbReference>
<dbReference type="GO" id="GO:1905555">
    <property type="term" value="P:positive regulation of blood vessel branching"/>
    <property type="evidence" value="ECO:0000266"/>
    <property type="project" value="RGD"/>
</dbReference>
<dbReference type="GO" id="GO:0043536">
    <property type="term" value="P:positive regulation of blood vessel endothelial cell migration"/>
    <property type="evidence" value="ECO:0000266"/>
    <property type="project" value="RGD"/>
</dbReference>
<dbReference type="GO" id="GO:1903589">
    <property type="term" value="P:positive regulation of blood vessel endothelial cell proliferation involved in sprouting angiogenesis"/>
    <property type="evidence" value="ECO:0000266"/>
    <property type="project" value="RGD"/>
</dbReference>
<dbReference type="GO" id="GO:0090190">
    <property type="term" value="P:positive regulation of branching involved in ureteric bud morphogenesis"/>
    <property type="evidence" value="ECO:0000266"/>
    <property type="project" value="RGD"/>
</dbReference>
<dbReference type="GO" id="GO:0045785">
    <property type="term" value="P:positive regulation of cell adhesion"/>
    <property type="evidence" value="ECO:0000266"/>
    <property type="project" value="RGD"/>
</dbReference>
<dbReference type="GO" id="GO:0051781">
    <property type="term" value="P:positive regulation of cell division"/>
    <property type="evidence" value="ECO:0007669"/>
    <property type="project" value="UniProtKB-KW"/>
</dbReference>
<dbReference type="GO" id="GO:0030335">
    <property type="term" value="P:positive regulation of cell migration"/>
    <property type="evidence" value="ECO:0000266"/>
    <property type="project" value="RGD"/>
</dbReference>
<dbReference type="GO" id="GO:0090050">
    <property type="term" value="P:positive regulation of cell migration involved in sprouting angiogenesis"/>
    <property type="evidence" value="ECO:0000266"/>
    <property type="project" value="RGD"/>
</dbReference>
<dbReference type="GO" id="GO:0008284">
    <property type="term" value="P:positive regulation of cell population proliferation"/>
    <property type="evidence" value="ECO:0000315"/>
    <property type="project" value="RGD"/>
</dbReference>
<dbReference type="GO" id="GO:0038091">
    <property type="term" value="P:positive regulation of cell proliferation by VEGF-activated platelet derived growth factor receptor signaling pathway"/>
    <property type="evidence" value="ECO:0000266"/>
    <property type="project" value="RGD"/>
</dbReference>
<dbReference type="GO" id="GO:0120162">
    <property type="term" value="P:positive regulation of cold-induced thermogenesis"/>
    <property type="evidence" value="ECO:0000250"/>
    <property type="project" value="YuBioLab"/>
</dbReference>
<dbReference type="GO" id="GO:2001028">
    <property type="term" value="P:positive regulation of endothelial cell chemotaxis"/>
    <property type="evidence" value="ECO:0000266"/>
    <property type="project" value="RGD"/>
</dbReference>
<dbReference type="GO" id="GO:0038033">
    <property type="term" value="P:positive regulation of endothelial cell chemotaxis by VEGF-activated vascular endothelial growth factor receptor signaling pathway"/>
    <property type="evidence" value="ECO:0000266"/>
    <property type="project" value="RGD"/>
</dbReference>
<dbReference type="GO" id="GO:0010595">
    <property type="term" value="P:positive regulation of endothelial cell migration"/>
    <property type="evidence" value="ECO:0000250"/>
    <property type="project" value="UniProtKB"/>
</dbReference>
<dbReference type="GO" id="GO:0001938">
    <property type="term" value="P:positive regulation of endothelial cell proliferation"/>
    <property type="evidence" value="ECO:0000250"/>
    <property type="project" value="UniProtKB"/>
</dbReference>
<dbReference type="GO" id="GO:0050679">
    <property type="term" value="P:positive regulation of epithelial cell proliferation"/>
    <property type="evidence" value="ECO:0000266"/>
    <property type="project" value="RGD"/>
</dbReference>
<dbReference type="GO" id="GO:0051894">
    <property type="term" value="P:positive regulation of focal adhesion assembly"/>
    <property type="evidence" value="ECO:0000250"/>
    <property type="project" value="UniProtKB"/>
</dbReference>
<dbReference type="GO" id="GO:1901492">
    <property type="term" value="P:positive regulation of lymphangiogenesis"/>
    <property type="evidence" value="ECO:0000266"/>
    <property type="project" value="RGD"/>
</dbReference>
<dbReference type="GO" id="GO:0043410">
    <property type="term" value="P:positive regulation of MAPK cascade"/>
    <property type="evidence" value="ECO:0000266"/>
    <property type="project" value="RGD"/>
</dbReference>
<dbReference type="GO" id="GO:0060754">
    <property type="term" value="P:positive regulation of mast cell chemotaxis"/>
    <property type="evidence" value="ECO:0000318"/>
    <property type="project" value="GO_Central"/>
</dbReference>
<dbReference type="GO" id="GO:0002052">
    <property type="term" value="P:positive regulation of neuroblast proliferation"/>
    <property type="evidence" value="ECO:0000266"/>
    <property type="project" value="RGD"/>
</dbReference>
<dbReference type="GO" id="GO:0045669">
    <property type="term" value="P:positive regulation of osteoblast differentiation"/>
    <property type="evidence" value="ECO:0000266"/>
    <property type="project" value="RGD"/>
</dbReference>
<dbReference type="GO" id="GO:0050731">
    <property type="term" value="P:positive regulation of peptidyl-tyrosine phosphorylation"/>
    <property type="evidence" value="ECO:0000250"/>
    <property type="project" value="UniProtKB"/>
</dbReference>
<dbReference type="GO" id="GO:0051897">
    <property type="term" value="P:positive regulation of phosphatidylinositol 3-kinase/protein kinase B signal transduction"/>
    <property type="evidence" value="ECO:0000266"/>
    <property type="project" value="RGD"/>
</dbReference>
<dbReference type="GO" id="GO:0050927">
    <property type="term" value="P:positive regulation of positive chemotaxis"/>
    <property type="evidence" value="ECO:0000266"/>
    <property type="project" value="RGD"/>
</dbReference>
<dbReference type="GO" id="GO:0001934">
    <property type="term" value="P:positive regulation of protein phosphorylation"/>
    <property type="evidence" value="ECO:0000250"/>
    <property type="project" value="UniProtKB"/>
</dbReference>
<dbReference type="GO" id="GO:0031334">
    <property type="term" value="P:positive regulation of protein-containing complex assembly"/>
    <property type="evidence" value="ECO:0000250"/>
    <property type="project" value="UniProtKB"/>
</dbReference>
<dbReference type="GO" id="GO:0002092">
    <property type="term" value="P:positive regulation of receptor internalization"/>
    <property type="evidence" value="ECO:0000266"/>
    <property type="project" value="RGD"/>
</dbReference>
<dbReference type="GO" id="GO:0009967">
    <property type="term" value="P:positive regulation of signal transduction"/>
    <property type="evidence" value="ECO:0000314"/>
    <property type="project" value="RGD"/>
</dbReference>
<dbReference type="GO" id="GO:0048661">
    <property type="term" value="P:positive regulation of smooth muscle cell proliferation"/>
    <property type="evidence" value="ECO:0000315"/>
    <property type="project" value="RGD"/>
</dbReference>
<dbReference type="GO" id="GO:1903672">
    <property type="term" value="P:positive regulation of sprouting angiogenesis"/>
    <property type="evidence" value="ECO:0000266"/>
    <property type="project" value="RGD"/>
</dbReference>
<dbReference type="GO" id="GO:0045944">
    <property type="term" value="P:positive regulation of transcription by RNA polymerase II"/>
    <property type="evidence" value="ECO:0000314"/>
    <property type="project" value="RGD"/>
</dbReference>
<dbReference type="GO" id="GO:1901165">
    <property type="term" value="P:positive regulation of trophoblast cell migration"/>
    <property type="evidence" value="ECO:0000266"/>
    <property type="project" value="RGD"/>
</dbReference>
<dbReference type="GO" id="GO:1900748">
    <property type="term" value="P:positive regulation of vascular endothelial growth factor signaling pathway"/>
    <property type="evidence" value="ECO:0000266"/>
    <property type="project" value="RGD"/>
</dbReference>
<dbReference type="GO" id="GO:0043117">
    <property type="term" value="P:positive regulation of vascular permeability"/>
    <property type="evidence" value="ECO:0000315"/>
    <property type="project" value="RGD"/>
</dbReference>
<dbReference type="GO" id="GO:0031077">
    <property type="term" value="P:post-embryonic camera-type eye development"/>
    <property type="evidence" value="ECO:0000266"/>
    <property type="project" value="RGD"/>
</dbReference>
<dbReference type="GO" id="GO:0060319">
    <property type="term" value="P:primitive erythrocyte differentiation"/>
    <property type="evidence" value="ECO:0000266"/>
    <property type="project" value="RGD"/>
</dbReference>
<dbReference type="GO" id="GO:0008360">
    <property type="term" value="P:regulation of cell shape"/>
    <property type="evidence" value="ECO:0000266"/>
    <property type="project" value="RGD"/>
</dbReference>
<dbReference type="GO" id="GO:0045601">
    <property type="term" value="P:regulation of endothelial cell differentiation"/>
    <property type="evidence" value="ECO:0000266"/>
    <property type="project" value="RGD"/>
</dbReference>
<dbReference type="GO" id="GO:0040008">
    <property type="term" value="P:regulation of growth"/>
    <property type="evidence" value="ECO:0000266"/>
    <property type="project" value="RGD"/>
</dbReference>
<dbReference type="GO" id="GO:1901532">
    <property type="term" value="P:regulation of hematopoietic progenitor cell differentiation"/>
    <property type="evidence" value="ECO:0000266"/>
    <property type="project" value="RGD"/>
</dbReference>
<dbReference type="GO" id="GO:0010749">
    <property type="term" value="P:regulation of nitric oxide mediated signal transduction"/>
    <property type="evidence" value="ECO:0000266"/>
    <property type="project" value="RGD"/>
</dbReference>
<dbReference type="GO" id="GO:0071548">
    <property type="term" value="P:response to dexamethasone"/>
    <property type="evidence" value="ECO:0000270"/>
    <property type="project" value="RGD"/>
</dbReference>
<dbReference type="GO" id="GO:0032355">
    <property type="term" value="P:response to estradiol"/>
    <property type="evidence" value="ECO:0000270"/>
    <property type="project" value="RGD"/>
</dbReference>
<dbReference type="GO" id="GO:0051593">
    <property type="term" value="P:response to folic acid"/>
    <property type="evidence" value="ECO:0000270"/>
    <property type="project" value="RGD"/>
</dbReference>
<dbReference type="GO" id="GO:0001666">
    <property type="term" value="P:response to hypoxia"/>
    <property type="evidence" value="ECO:0000314"/>
    <property type="project" value="RGD"/>
</dbReference>
<dbReference type="GO" id="GO:0070482">
    <property type="term" value="P:response to oxygen levels"/>
    <property type="evidence" value="ECO:0000270"/>
    <property type="project" value="RGD"/>
</dbReference>
<dbReference type="GO" id="GO:0032570">
    <property type="term" value="P:response to progesterone"/>
    <property type="evidence" value="ECO:0000270"/>
    <property type="project" value="RGD"/>
</dbReference>
<dbReference type="GO" id="GO:0033189">
    <property type="term" value="P:response to vitamin A"/>
    <property type="evidence" value="ECO:0000270"/>
    <property type="project" value="RGD"/>
</dbReference>
<dbReference type="GO" id="GO:0031290">
    <property type="term" value="P:retinal ganglion cell axon guidance"/>
    <property type="evidence" value="ECO:0000266"/>
    <property type="project" value="RGD"/>
</dbReference>
<dbReference type="GO" id="GO:0002040">
    <property type="term" value="P:sprouting angiogenesis"/>
    <property type="evidence" value="ECO:0000318"/>
    <property type="project" value="GO_Central"/>
</dbReference>
<dbReference type="GO" id="GO:0043129">
    <property type="term" value="P:surfactant homeostasis"/>
    <property type="evidence" value="ECO:0000266"/>
    <property type="project" value="RGD"/>
</dbReference>
<dbReference type="GO" id="GO:0042088">
    <property type="term" value="P:T-helper 1 type immune response"/>
    <property type="evidence" value="ECO:0000314"/>
    <property type="project" value="RGD"/>
</dbReference>
<dbReference type="GO" id="GO:0048771">
    <property type="term" value="P:tissue remodeling"/>
    <property type="evidence" value="ECO:0000270"/>
    <property type="project" value="RGD"/>
</dbReference>
<dbReference type="GO" id="GO:0035148">
    <property type="term" value="P:tube formation"/>
    <property type="evidence" value="ECO:0000250"/>
    <property type="project" value="UniProtKB"/>
</dbReference>
<dbReference type="GO" id="GO:0048010">
    <property type="term" value="P:vascular endothelial growth factor receptor signaling pathway"/>
    <property type="evidence" value="ECO:0000315"/>
    <property type="project" value="RGD"/>
</dbReference>
<dbReference type="GO" id="GO:0036324">
    <property type="term" value="P:vascular endothelial growth factor receptor-2 signaling pathway"/>
    <property type="evidence" value="ECO:0000266"/>
    <property type="project" value="RGD"/>
</dbReference>
<dbReference type="GO" id="GO:0038084">
    <property type="term" value="P:vascular endothelial growth factor signaling pathway"/>
    <property type="evidence" value="ECO:0000266"/>
    <property type="project" value="RGD"/>
</dbReference>
<dbReference type="GO" id="GO:0061042">
    <property type="term" value="P:vascular wound healing"/>
    <property type="evidence" value="ECO:0000266"/>
    <property type="project" value="RGD"/>
</dbReference>
<dbReference type="GO" id="GO:0001944">
    <property type="term" value="P:vasculature development"/>
    <property type="evidence" value="ECO:0000266"/>
    <property type="project" value="RGD"/>
</dbReference>
<dbReference type="GO" id="GO:0042311">
    <property type="term" value="P:vasodilation"/>
    <property type="evidence" value="ECO:0000266"/>
    <property type="project" value="RGD"/>
</dbReference>
<dbReference type="CDD" id="cd00135">
    <property type="entry name" value="PDGF"/>
    <property type="match status" value="1"/>
</dbReference>
<dbReference type="FunFam" id="2.10.160.10:FF:000001">
    <property type="entry name" value="Vascular endothelial growth factor A"/>
    <property type="match status" value="1"/>
</dbReference>
<dbReference type="FunFam" id="2.10.90.10:FF:000009">
    <property type="entry name" value="Vascular endothelial growth factor A"/>
    <property type="match status" value="1"/>
</dbReference>
<dbReference type="Gene3D" id="2.10.90.10">
    <property type="entry name" value="Cystine-knot cytokines"/>
    <property type="match status" value="1"/>
</dbReference>
<dbReference type="Gene3D" id="2.10.160.10">
    <property type="entry name" value="Vascular endothelial growth factor, heparin-binding domain"/>
    <property type="match status" value="1"/>
</dbReference>
<dbReference type="InterPro" id="IPR029034">
    <property type="entry name" value="Cystine-knot_cytokine"/>
</dbReference>
<dbReference type="InterPro" id="IPR023581">
    <property type="entry name" value="PD_growth_factor_CS"/>
</dbReference>
<dbReference type="InterPro" id="IPR000072">
    <property type="entry name" value="PDGF/VEGF_dom"/>
</dbReference>
<dbReference type="InterPro" id="IPR050507">
    <property type="entry name" value="PDGF/VEGF_growth_factor"/>
</dbReference>
<dbReference type="InterPro" id="IPR027928">
    <property type="entry name" value="VEGF_C"/>
</dbReference>
<dbReference type="InterPro" id="IPR036841">
    <property type="entry name" value="VEGF_C_sf"/>
</dbReference>
<dbReference type="PANTHER" id="PTHR12025">
    <property type="entry name" value="VASCULAR ENDOTHELIAL GROWTH FACTOR"/>
    <property type="match status" value="1"/>
</dbReference>
<dbReference type="PANTHER" id="PTHR12025:SF5">
    <property type="entry name" value="VASCULAR ENDOTHELIAL GROWTH FACTOR A, LONG FORM"/>
    <property type="match status" value="1"/>
</dbReference>
<dbReference type="Pfam" id="PF00341">
    <property type="entry name" value="PDGF"/>
    <property type="match status" value="1"/>
</dbReference>
<dbReference type="Pfam" id="PF14554">
    <property type="entry name" value="VEGF_C"/>
    <property type="match status" value="1"/>
</dbReference>
<dbReference type="SMART" id="SM00141">
    <property type="entry name" value="PDGF"/>
    <property type="match status" value="1"/>
</dbReference>
<dbReference type="SUPFAM" id="SSF57501">
    <property type="entry name" value="Cystine-knot cytokines"/>
    <property type="match status" value="1"/>
</dbReference>
<dbReference type="SUPFAM" id="SSF57593">
    <property type="entry name" value="Heparin-binding domain from vascular endothelial growth factor"/>
    <property type="match status" value="1"/>
</dbReference>
<dbReference type="PROSITE" id="PS00249">
    <property type="entry name" value="PDGF_1"/>
    <property type="match status" value="1"/>
</dbReference>
<dbReference type="PROSITE" id="PS50278">
    <property type="entry name" value="PDGF_2"/>
    <property type="match status" value="1"/>
</dbReference>
<name>VEGFA_RAT</name>
<gene>
    <name type="primary">Vegfa</name>
    <name type="synonym">Vegf</name>
</gene>
<proteinExistence type="evidence at protein level"/>
<sequence>MNFLLSWVHWTLALLLYLHHAKWSQAAPTTEGEQKAHEVVKFMDVYQRSYCRPIETLVDIFQEYPDEIEYIFKPSCVPLMRCAGCCNDEALECVPTSESNVTMQIMRIKPHQSQHIGEMSFLQHSRCECRPKKDRTKPEKKSVRGKGKGQKRKRKKSRFKSWSVHCEPCSERRKHLFVQDPQTCKCSCKNTDSRCKARQLELNERTCRCDKPRR</sequence>
<reference key="1">
    <citation type="journal article" date="1990" name="Proc. Natl. Acad. Sci. U.S.A.">
        <title>Amino acid and cDNA sequences of a vascular endothelial cell mitogen that is homologous to platelet-derived growth factor.</title>
        <authorList>
            <person name="Conn G."/>
            <person name="Bayne M.L."/>
            <person name="Soderman D.D."/>
            <person name="Kwok P.W."/>
            <person name="Sullivan K.A."/>
            <person name="Palisi T.M."/>
            <person name="Hope D.A."/>
            <person name="Thomas K.A."/>
        </authorList>
    </citation>
    <scope>NUCLEOTIDE SEQUENCE [MRNA] (ISOFORM VEGF-A164)</scope>
    <scope>PROTEIN SEQUENCE OF 27-190</scope>
</reference>
<reference key="2">
    <citation type="journal article" date="2001" name="Arch. Oral Biol.">
        <title>Developmental expression of vascular endothelial growth factor in the masseter muscle of rats.</title>
        <authorList>
            <person name="Ishii H."/>
            <person name="Oota I."/>
            <person name="Takuma T."/>
            <person name="Inomata K."/>
        </authorList>
    </citation>
    <scope>NUCLEOTIDE SEQUENCE [MRNA] (ISOFORMS VEGF-A188; VEGF-A164; VEGF-A144 AND VEGF-A120)</scope>
</reference>
<reference key="3">
    <citation type="submission" date="2001-04" db="EMBL/GenBank/DDBJ databases">
        <title>Cloning of multiple VEGF splice variants from hypoxic neonatal rat cardiomyocytes.</title>
        <authorList>
            <person name="Marion S."/>
            <person name="Lee T.-C."/>
        </authorList>
    </citation>
    <scope>NUCLEOTIDE SEQUENCE [MRNA] (ISOFORMS VEGF-A164 AND VEGF-A188)</scope>
    <source>
        <strain>Sprague-Dawley</strain>
    </source>
</reference>
<reference key="4">
    <citation type="journal article" date="1995" name="J. Biol. Chem.">
        <title>Purification and characterization of a naturally occurring vascular endothelial growth factor.placenta growth factor heterodimer.</title>
        <authorList>
            <person name="DiSalvo J."/>
            <person name="Bayne M.L."/>
            <person name="Conn G."/>
            <person name="Kwok P.W."/>
            <person name="Trivedi P.G."/>
            <person name="Soderman D.D."/>
            <person name="Palisi T.M."/>
            <person name="Sullivan K.A."/>
            <person name="Thomas K.A."/>
        </authorList>
    </citation>
    <scope>PROTEIN SEQUENCE OF 27-40</scope>
    <scope>SUBUNIT</scope>
    <source>
        <tissue>Glial tumor</tissue>
    </source>
</reference>
<reference key="5">
    <citation type="journal article" date="2000" name="Dev. Dyn.">
        <title>Regulation of VEGF and VEGF receptor expression in the rodent mammary gland during pregnancy, lactation, and involution.</title>
        <authorList>
            <person name="Pepper M.S."/>
            <person name="Baetens D."/>
            <person name="Mandriota S.J."/>
            <person name="Di Sanza C."/>
            <person name="Oikemus S."/>
            <person name="Lane T.F."/>
            <person name="Soriano J.V."/>
            <person name="Montesano R."/>
            <person name="Iruela-Arispe M.L."/>
        </authorList>
    </citation>
    <scope>FUNCTION</scope>
    <scope>TISSUE SPECIFICITY</scope>
    <scope>DEVELOPMENTAL STAGE</scope>
</reference>